<gene>
    <name type="primary">QDPR</name>
</gene>
<proteinExistence type="evidence at transcript level"/>
<keyword id="KW-0521">NADP</keyword>
<keyword id="KW-0560">Oxidoreductase</keyword>
<keyword id="KW-1185">Reference proteome</keyword>
<keyword id="KW-0783">Tetrahydrobiopterin biosynthesis</keyword>
<accession>Q3T0Z7</accession>
<feature type="chain" id="PRO_0000284384" description="Dihydropteridine reductase">
    <location>
        <begin position="1"/>
        <end position="242"/>
    </location>
</feature>
<feature type="active site" description="Proton acceptor" evidence="5">
    <location>
        <position position="148"/>
    </location>
</feature>
<feature type="binding site" evidence="1">
    <location>
        <begin position="12"/>
        <end position="36"/>
    </location>
    <ligand>
        <name>NADP(+)</name>
        <dbReference type="ChEBI" id="CHEBI:58349"/>
    </ligand>
</feature>
<feature type="modified residue" description="N6-succinyllysine" evidence="4">
    <location>
        <position position="71"/>
    </location>
</feature>
<feature type="modified residue" description="N6-succinyllysine" evidence="4">
    <location>
        <position position="77"/>
    </location>
</feature>
<feature type="modified residue" description="N6-succinyllysine" evidence="4">
    <location>
        <position position="94"/>
    </location>
</feature>
<feature type="modified residue" description="N6-succinyllysine" evidence="4">
    <location>
        <position position="100"/>
    </location>
</feature>
<evidence type="ECO:0000250" key="1"/>
<evidence type="ECO:0000250" key="2">
    <source>
        <dbReference type="UniProtKB" id="P09417"/>
    </source>
</evidence>
<evidence type="ECO:0000250" key="3">
    <source>
        <dbReference type="UniProtKB" id="P11348"/>
    </source>
</evidence>
<evidence type="ECO:0000250" key="4">
    <source>
        <dbReference type="UniProtKB" id="Q8BVI4"/>
    </source>
</evidence>
<evidence type="ECO:0000255" key="5">
    <source>
        <dbReference type="PROSITE-ProRule" id="PRU10001"/>
    </source>
</evidence>
<evidence type="ECO:0000305" key="6"/>
<protein>
    <recommendedName>
        <fullName>Dihydropteridine reductase</fullName>
        <ecNumber evidence="2">1.5.1.34</ecNumber>
    </recommendedName>
    <alternativeName>
        <fullName>HDHPR</fullName>
    </alternativeName>
    <alternativeName>
        <fullName>Quinoid dihydropteridine reductase</fullName>
    </alternativeName>
</protein>
<organism>
    <name type="scientific">Bos taurus</name>
    <name type="common">Bovine</name>
    <dbReference type="NCBI Taxonomy" id="9913"/>
    <lineage>
        <taxon>Eukaryota</taxon>
        <taxon>Metazoa</taxon>
        <taxon>Chordata</taxon>
        <taxon>Craniata</taxon>
        <taxon>Vertebrata</taxon>
        <taxon>Euteleostomi</taxon>
        <taxon>Mammalia</taxon>
        <taxon>Eutheria</taxon>
        <taxon>Laurasiatheria</taxon>
        <taxon>Artiodactyla</taxon>
        <taxon>Ruminantia</taxon>
        <taxon>Pecora</taxon>
        <taxon>Bovidae</taxon>
        <taxon>Bovinae</taxon>
        <taxon>Bos</taxon>
    </lineage>
</organism>
<dbReference type="EC" id="1.5.1.34" evidence="2"/>
<dbReference type="EMBL" id="BC102193">
    <property type="protein sequence ID" value="AAI02194.1"/>
    <property type="molecule type" value="mRNA"/>
</dbReference>
<dbReference type="RefSeq" id="NP_001069960.1">
    <property type="nucleotide sequence ID" value="NM_001076492.2"/>
</dbReference>
<dbReference type="SMR" id="Q3T0Z7"/>
<dbReference type="FunCoup" id="Q3T0Z7">
    <property type="interactions" value="1107"/>
</dbReference>
<dbReference type="STRING" id="9913.ENSBTAP00000049659"/>
<dbReference type="PaxDb" id="9913-ENSBTAP00000049659"/>
<dbReference type="PeptideAtlas" id="Q3T0Z7"/>
<dbReference type="GeneID" id="618084"/>
<dbReference type="KEGG" id="bta:618084"/>
<dbReference type="CTD" id="5860"/>
<dbReference type="VEuPathDB" id="HostDB:ENSBTAG00000040333"/>
<dbReference type="eggNOG" id="KOG4022">
    <property type="taxonomic scope" value="Eukaryota"/>
</dbReference>
<dbReference type="HOGENOM" id="CLU_010194_22_0_1"/>
<dbReference type="InParanoid" id="Q3T0Z7"/>
<dbReference type="OMA" id="QCVRYFK"/>
<dbReference type="OrthoDB" id="1204at2759"/>
<dbReference type="TreeFam" id="TF105932"/>
<dbReference type="Reactome" id="R-BTA-8964208">
    <property type="pathway name" value="Phenylalanine metabolism"/>
</dbReference>
<dbReference type="Proteomes" id="UP000009136">
    <property type="component" value="Chromosome 6"/>
</dbReference>
<dbReference type="Bgee" id="ENSBTAG00000040333">
    <property type="expression patterns" value="Expressed in corpus epididymis and 104 other cell types or tissues"/>
</dbReference>
<dbReference type="GO" id="GO:0005737">
    <property type="term" value="C:cytoplasm"/>
    <property type="evidence" value="ECO:0000318"/>
    <property type="project" value="GO_Central"/>
</dbReference>
<dbReference type="GO" id="GO:0004155">
    <property type="term" value="F:6,7-dihydropteridine reductase activity"/>
    <property type="evidence" value="ECO:0000250"/>
    <property type="project" value="UniProtKB"/>
</dbReference>
<dbReference type="GO" id="GO:0070404">
    <property type="term" value="F:NADH binding"/>
    <property type="evidence" value="ECO:0000318"/>
    <property type="project" value="GO_Central"/>
</dbReference>
<dbReference type="GO" id="GO:0070402">
    <property type="term" value="F:NADPH binding"/>
    <property type="evidence" value="ECO:0000318"/>
    <property type="project" value="GO_Central"/>
</dbReference>
<dbReference type="GO" id="GO:0006559">
    <property type="term" value="P:L-phenylalanine catabolic process"/>
    <property type="evidence" value="ECO:0000318"/>
    <property type="project" value="GO_Central"/>
</dbReference>
<dbReference type="GO" id="GO:0006729">
    <property type="term" value="P:tetrahydrobiopterin biosynthetic process"/>
    <property type="evidence" value="ECO:0000250"/>
    <property type="project" value="UniProtKB"/>
</dbReference>
<dbReference type="CDD" id="cd05334">
    <property type="entry name" value="DHPR_SDR_c_like"/>
    <property type="match status" value="1"/>
</dbReference>
<dbReference type="FunFam" id="3.40.50.720:FF:000157">
    <property type="entry name" value="Quinoid dihydropteridine reductase"/>
    <property type="match status" value="1"/>
</dbReference>
<dbReference type="Gene3D" id="3.40.50.720">
    <property type="entry name" value="NAD(P)-binding Rossmann-like Domain"/>
    <property type="match status" value="1"/>
</dbReference>
<dbReference type="InterPro" id="IPR036291">
    <property type="entry name" value="NAD(P)-bd_dom_sf"/>
</dbReference>
<dbReference type="InterPro" id="IPR020904">
    <property type="entry name" value="Sc_DH/Rdtase_CS"/>
</dbReference>
<dbReference type="InterPro" id="IPR002347">
    <property type="entry name" value="SDR_fam"/>
</dbReference>
<dbReference type="PANTHER" id="PTHR15104">
    <property type="entry name" value="DIHYDROPTERIDINE REDUCTASE"/>
    <property type="match status" value="1"/>
</dbReference>
<dbReference type="PANTHER" id="PTHR15104:SF0">
    <property type="entry name" value="DIHYDROPTERIDINE REDUCTASE"/>
    <property type="match status" value="1"/>
</dbReference>
<dbReference type="Pfam" id="PF00106">
    <property type="entry name" value="adh_short"/>
    <property type="match status" value="1"/>
</dbReference>
<dbReference type="SUPFAM" id="SSF51735">
    <property type="entry name" value="NAD(P)-binding Rossmann-fold domains"/>
    <property type="match status" value="1"/>
</dbReference>
<dbReference type="PROSITE" id="PS00061">
    <property type="entry name" value="ADH_SHORT"/>
    <property type="match status" value="1"/>
</dbReference>
<comment type="function">
    <text evidence="2">Catalyzes the conversion of quinonoid dihydrobiopterin into tetrahydrobiopterin.</text>
</comment>
<comment type="catalytic activity">
    <reaction evidence="2">
        <text>5,6,7,8-tetrahydropteridine + NAD(+) = 6,7-dihydropteridine + NADH + H(+)</text>
        <dbReference type="Rhea" id="RHEA:17869"/>
        <dbReference type="ChEBI" id="CHEBI:15378"/>
        <dbReference type="ChEBI" id="CHEBI:28889"/>
        <dbReference type="ChEBI" id="CHEBI:30156"/>
        <dbReference type="ChEBI" id="CHEBI:57540"/>
        <dbReference type="ChEBI" id="CHEBI:57945"/>
        <dbReference type="EC" id="1.5.1.34"/>
    </reaction>
    <physiologicalReaction direction="right-to-left" evidence="2">
        <dbReference type="Rhea" id="RHEA:17871"/>
    </physiologicalReaction>
</comment>
<comment type="catalytic activity">
    <reaction evidence="2">
        <text>5,6,7,8-tetrahydropteridine + NADP(+) = 6,7-dihydropteridine + NADPH + H(+)</text>
        <dbReference type="Rhea" id="RHEA:17865"/>
        <dbReference type="ChEBI" id="CHEBI:15378"/>
        <dbReference type="ChEBI" id="CHEBI:28889"/>
        <dbReference type="ChEBI" id="CHEBI:30156"/>
        <dbReference type="ChEBI" id="CHEBI:57783"/>
        <dbReference type="ChEBI" id="CHEBI:58349"/>
        <dbReference type="EC" id="1.5.1.34"/>
    </reaction>
    <physiologicalReaction direction="right-to-left" evidence="2">
        <dbReference type="Rhea" id="RHEA:17867"/>
    </physiologicalReaction>
</comment>
<comment type="subunit">
    <text evidence="3">Homodimer.</text>
</comment>
<comment type="similarity">
    <text evidence="6">Belongs to the short-chain dehydrogenases/reductases (SDR) family.</text>
</comment>
<reference key="1">
    <citation type="submission" date="2005-08" db="EMBL/GenBank/DDBJ databases">
        <authorList>
            <consortium name="NIH - Mammalian Gene Collection (MGC) project"/>
        </authorList>
    </citation>
    <scope>NUCLEOTIDE SEQUENCE [LARGE SCALE MRNA]</scope>
    <source>
        <strain>Crossbred X Angus</strain>
        <tissue>Ileum</tissue>
    </source>
</reference>
<sequence length="242" mass="25504">MAAAAGEARRVLVYGGRGALGSRCVQAFRARNWWVASIDVQENEEASANVVVKMTDSFTEQADQVTAEVGKLLGTEKVDAILCVAGGWAGGNAKSKSLFKNCDLMWKQSVWTSTISSHLATKHLKEGGLLTLAGARAALDGTPGMIGYGMAKAAVHQLCQSLAGKSSGLPPGAAAVALLPVTLDTPVNRKSMPEADFSSWTPLEFLVETFHDWITEKNRPSSGSLIQVVTTEGKTELTAASP</sequence>
<name>DHPR_BOVIN</name>